<gene>
    <name evidence="2" type="primary">AQP2</name>
</gene>
<organism>
    <name type="scientific">Elephas maximus</name>
    <name type="common">Indian elephant</name>
    <dbReference type="NCBI Taxonomy" id="9783"/>
    <lineage>
        <taxon>Eukaryota</taxon>
        <taxon>Metazoa</taxon>
        <taxon>Chordata</taxon>
        <taxon>Craniata</taxon>
        <taxon>Vertebrata</taxon>
        <taxon>Euteleostomi</taxon>
        <taxon>Mammalia</taxon>
        <taxon>Eutheria</taxon>
        <taxon>Afrotheria</taxon>
        <taxon>Proboscidea</taxon>
        <taxon>Elephantidae</taxon>
        <taxon>Elephas</taxon>
    </lineage>
</organism>
<proteinExistence type="inferred from homology"/>
<reference key="1">
    <citation type="journal article" date="1997" name="Mol. Biol. Evol.">
        <title>Molecular evolution of mammalian aquaporin-2: further evidence that elephant shrew and aardvark join the paenungulate clade.</title>
        <authorList>
            <person name="Madsen O.J."/>
            <person name="Deen P.M.T."/>
            <person name="Pesole G."/>
            <person name="Saccone C."/>
            <person name="de Jong W.W."/>
        </authorList>
    </citation>
    <scope>NUCLEOTIDE SEQUENCE [GENOMIC DNA]</scope>
</reference>
<name>AQP2_ELEMA</name>
<keyword id="KW-1003">Cell membrane</keyword>
<keyword id="KW-0968">Cytoplasmic vesicle</keyword>
<keyword id="KW-0325">Glycoprotein</keyword>
<keyword id="KW-0333">Golgi apparatus</keyword>
<keyword id="KW-0472">Membrane</keyword>
<keyword id="KW-0597">Phosphoprotein</keyword>
<keyword id="KW-0812">Transmembrane</keyword>
<keyword id="KW-1133">Transmembrane helix</keyword>
<keyword id="KW-0813">Transport</keyword>
<sequence length="109" mass="11320">SIAFSRAVFSEFLATLLFVFFGLGSALNWPQALPSVLQIAMAFGLAIGTLVQTLGHISGAHINPAVTVACLVGCHVSFLRATFYLAAQLLGAVAGAALLHELTPPDIRG</sequence>
<protein>
    <recommendedName>
        <fullName evidence="3">Aquaporin-2</fullName>
        <shortName>AQP-2</shortName>
    </recommendedName>
    <alternativeName>
        <fullName>ADH water channel</fullName>
    </alternativeName>
    <alternativeName>
        <fullName>Aquaporin-CD</fullName>
        <shortName>AQP-CD</shortName>
    </alternativeName>
    <alternativeName>
        <fullName>Collecting duct water channel protein</fullName>
    </alternativeName>
    <alternativeName>
        <fullName>WCH-CD</fullName>
    </alternativeName>
    <alternativeName>
        <fullName>Water channel protein for renal collecting duct</fullName>
    </alternativeName>
</protein>
<comment type="function">
    <text evidence="2">Forms a water-specific channel that provides the plasma membranes of renal collecting duct with high permeability to water, thereby permitting water to move in the direction of an osmotic gradient. Plays an essential role in renal water homeostasis. Could also be permeable to glycerol.</text>
</comment>
<comment type="catalytic activity">
    <reaction evidence="2">
        <text>H2O(in) = H2O(out)</text>
        <dbReference type="Rhea" id="RHEA:29667"/>
        <dbReference type="ChEBI" id="CHEBI:15377"/>
    </reaction>
</comment>
<comment type="catalytic activity">
    <reaction evidence="2">
        <text>glycerol(in) = glycerol(out)</text>
        <dbReference type="Rhea" id="RHEA:29675"/>
        <dbReference type="ChEBI" id="CHEBI:17754"/>
    </reaction>
</comment>
<comment type="subunit">
    <text evidence="2">Homotetramer.</text>
</comment>
<comment type="subcellular location">
    <subcellularLocation>
        <location evidence="2">Apical cell membrane</location>
        <topology evidence="2">Multi-pass membrane protein</topology>
    </subcellularLocation>
    <subcellularLocation>
        <location evidence="1">Basolateral cell membrane</location>
        <topology evidence="2">Multi-pass membrane protein</topology>
    </subcellularLocation>
    <subcellularLocation>
        <location evidence="2">Cell membrane</location>
        <topology evidence="2">Multi-pass membrane protein</topology>
    </subcellularLocation>
    <subcellularLocation>
        <location evidence="2">Cytoplasmic vesicle membrane</location>
        <topology evidence="2">Multi-pass membrane protein</topology>
    </subcellularLocation>
    <subcellularLocation>
        <location evidence="2">Golgi apparatus</location>
        <location evidence="2">trans-Golgi network membrane</location>
        <topology evidence="2">Multi-pass membrane protein</topology>
    </subcellularLocation>
    <text evidence="2">Shuttles from vesicles to the apical membrane. Vasopressin-regulated phosphorylation is required for translocation to the apical cell membrane. PLEKHA8/FAPP2 is required to transport AQP2 from the TGN to sites where AQP2 is phosphorylated.</text>
</comment>
<comment type="domain">
    <text evidence="2">Aquaporins contain two tandem repeats each containing three membrane-spanning domains and a pore-forming loop with the signature motif Asn-Pro-Ala (NPA).</text>
</comment>
<comment type="PTM">
    <text evidence="2">Serine phosphorylation is necessary and sufficient for expression at the apical membrane. Endocytosis is not phosphorylation-dependent.</text>
</comment>
<comment type="PTM">
    <text evidence="2">N-glycosylated.</text>
</comment>
<comment type="similarity">
    <text evidence="4">Belongs to the MIP/aquaporin (TC 1.A.8) family.</text>
</comment>
<evidence type="ECO:0000250" key="1">
    <source>
        <dbReference type="UniProtKB" id="P34080"/>
    </source>
</evidence>
<evidence type="ECO:0000250" key="2">
    <source>
        <dbReference type="UniProtKB" id="P41181"/>
    </source>
</evidence>
<evidence type="ECO:0000303" key="3">
    <source>
    </source>
</evidence>
<evidence type="ECO:0000305" key="4"/>
<accession>P79168</accession>
<feature type="chain" id="PRO_0000063931" description="Aquaporin-2">
    <location>
        <begin position="1" status="less than"/>
        <end position="109" status="greater than"/>
    </location>
</feature>
<feature type="topological domain" description="Cytoplasmic" evidence="4">
    <location>
        <begin position="1" status="less than"/>
        <end position="6"/>
    </location>
</feature>
<feature type="transmembrane region" description="Helical" evidence="2">
    <location>
        <begin position="7"/>
        <end position="27"/>
    </location>
</feature>
<feature type="topological domain" description="Extracellular" evidence="4">
    <location>
        <begin position="28"/>
        <end position="35"/>
    </location>
</feature>
<feature type="transmembrane region" description="Helical" evidence="2">
    <location>
        <begin position="36"/>
        <end position="54"/>
    </location>
</feature>
<feature type="topological domain" description="Cytoplasmic" evidence="4">
    <location>
        <begin position="55"/>
        <end position="59"/>
    </location>
</feature>
<feature type="intramembrane region" description="Discontinuously helical" evidence="2">
    <location>
        <begin position="60"/>
        <end position="69"/>
    </location>
</feature>
<feature type="topological domain" description="Cytoplasmic" evidence="4">
    <location>
        <begin position="70"/>
        <end position="80"/>
    </location>
</feature>
<feature type="transmembrane region" description="Helical" evidence="2">
    <location>
        <begin position="81"/>
        <end position="102"/>
    </location>
</feature>
<feature type="topological domain" description="Extracellular" evidence="4">
    <location>
        <begin position="103"/>
        <end position="109" status="greater than"/>
    </location>
</feature>
<feature type="short sequence motif" description="NPA 1" evidence="2">
    <location>
        <begin position="63"/>
        <end position="65"/>
    </location>
</feature>
<feature type="non-terminal residue">
    <location>
        <position position="1"/>
    </location>
</feature>
<feature type="non-terminal residue">
    <location>
        <position position="109"/>
    </location>
</feature>
<dbReference type="EMBL" id="Y10629">
    <property type="protein sequence ID" value="CAA71654.1"/>
    <property type="molecule type" value="Genomic_DNA"/>
</dbReference>
<dbReference type="SMR" id="P79168"/>
<dbReference type="GO" id="GO:0016324">
    <property type="term" value="C:apical plasma membrane"/>
    <property type="evidence" value="ECO:0000250"/>
    <property type="project" value="UniProtKB"/>
</dbReference>
<dbReference type="GO" id="GO:0016323">
    <property type="term" value="C:basolateral plasma membrane"/>
    <property type="evidence" value="ECO:0007669"/>
    <property type="project" value="UniProtKB-SubCell"/>
</dbReference>
<dbReference type="GO" id="GO:0030659">
    <property type="term" value="C:cytoplasmic vesicle membrane"/>
    <property type="evidence" value="ECO:0007669"/>
    <property type="project" value="UniProtKB-SubCell"/>
</dbReference>
<dbReference type="GO" id="GO:0005794">
    <property type="term" value="C:Golgi apparatus"/>
    <property type="evidence" value="ECO:0007669"/>
    <property type="project" value="UniProtKB-SubCell"/>
</dbReference>
<dbReference type="GO" id="GO:0005886">
    <property type="term" value="C:plasma membrane"/>
    <property type="evidence" value="ECO:0000250"/>
    <property type="project" value="UniProtKB"/>
</dbReference>
<dbReference type="GO" id="GO:0015250">
    <property type="term" value="F:water channel activity"/>
    <property type="evidence" value="ECO:0000250"/>
    <property type="project" value="UniProtKB"/>
</dbReference>
<dbReference type="GO" id="GO:0051289">
    <property type="term" value="P:protein homotetramerization"/>
    <property type="evidence" value="ECO:0000250"/>
    <property type="project" value="UniProtKB"/>
</dbReference>
<dbReference type="GO" id="GO:0006833">
    <property type="term" value="P:water transport"/>
    <property type="evidence" value="ECO:0000250"/>
    <property type="project" value="UniProtKB"/>
</dbReference>
<dbReference type="FunFam" id="1.20.1080.10:FF:000032">
    <property type="entry name" value="Aquaporin-2"/>
    <property type="match status" value="1"/>
</dbReference>
<dbReference type="Gene3D" id="1.20.1080.10">
    <property type="entry name" value="Glycerol uptake facilitator protein"/>
    <property type="match status" value="1"/>
</dbReference>
<dbReference type="InterPro" id="IPR023271">
    <property type="entry name" value="Aquaporin-like"/>
</dbReference>
<dbReference type="InterPro" id="IPR034294">
    <property type="entry name" value="Aquaporin_transptr"/>
</dbReference>
<dbReference type="InterPro" id="IPR000425">
    <property type="entry name" value="MIP"/>
</dbReference>
<dbReference type="InterPro" id="IPR022357">
    <property type="entry name" value="MIP_CS"/>
</dbReference>
<dbReference type="PANTHER" id="PTHR19139">
    <property type="entry name" value="AQUAPORIN TRANSPORTER"/>
    <property type="match status" value="1"/>
</dbReference>
<dbReference type="PANTHER" id="PTHR19139:SF45">
    <property type="entry name" value="AQUAPORIN-2"/>
    <property type="match status" value="1"/>
</dbReference>
<dbReference type="Pfam" id="PF00230">
    <property type="entry name" value="MIP"/>
    <property type="match status" value="1"/>
</dbReference>
<dbReference type="PRINTS" id="PR02014">
    <property type="entry name" value="AQUAPORIN2"/>
</dbReference>
<dbReference type="PRINTS" id="PR00783">
    <property type="entry name" value="MINTRINSICP"/>
</dbReference>
<dbReference type="SUPFAM" id="SSF81338">
    <property type="entry name" value="Aquaporin-like"/>
    <property type="match status" value="1"/>
</dbReference>
<dbReference type="PROSITE" id="PS00221">
    <property type="entry name" value="MIP"/>
    <property type="match status" value="1"/>
</dbReference>